<gene>
    <name type="primary">CHS8</name>
</gene>
<name>CHS8_MEDSA</name>
<comment type="function">
    <text>The primary product of this enzyme is 4,2',4',6'-tetrahydroxychalcone (also termed naringenin-chalcone or chalcone) which can under specific conditions spontaneously isomerize into naringenin.</text>
</comment>
<comment type="catalytic activity">
    <reaction evidence="1">
        <text>(E)-4-coumaroyl-CoA + 3 malonyl-CoA + 3 H(+) = 2',4,4',6'-tetrahydroxychalcone + 3 CO2 + 4 CoA</text>
        <dbReference type="Rhea" id="RHEA:11128"/>
        <dbReference type="ChEBI" id="CHEBI:15378"/>
        <dbReference type="ChEBI" id="CHEBI:15413"/>
        <dbReference type="ChEBI" id="CHEBI:16526"/>
        <dbReference type="ChEBI" id="CHEBI:57287"/>
        <dbReference type="ChEBI" id="CHEBI:57384"/>
        <dbReference type="ChEBI" id="CHEBI:85008"/>
        <dbReference type="EC" id="2.3.1.74"/>
    </reaction>
</comment>
<comment type="pathway">
    <text>Secondary metabolite biosynthesis; flavonoid biosynthesis.</text>
</comment>
<comment type="similarity">
    <text evidence="2">Belongs to the thiolase-like superfamily. Chalcone/stilbene synthases family.</text>
</comment>
<protein>
    <recommendedName>
        <fullName>Chalcone synthase 8</fullName>
        <ecNumber>2.3.1.74</ecNumber>
    </recommendedName>
    <alternativeName>
        <fullName>Naringenin-chalcone synthase 8</fullName>
    </alternativeName>
</protein>
<proteinExistence type="evidence at transcript level"/>
<keyword id="KW-0012">Acyltransferase</keyword>
<keyword id="KW-0284">Flavonoid biosynthesis</keyword>
<keyword id="KW-0808">Transferase</keyword>
<feature type="chain" id="PRO_0000216013" description="Chalcone synthase 8">
    <location>
        <begin position="1"/>
        <end position="389"/>
    </location>
</feature>
<feature type="active site" evidence="1">
    <location>
        <position position="164"/>
    </location>
</feature>
<accession>P30076</accession>
<reference key="1">
    <citation type="journal article" date="1993" name="Plant Mol. Biol.">
        <title>Stress responses in alfalfa (Medicago sativa L.). 15. Characterization and expression patterns of members of a subset of the chalcone synthase multigene family.</title>
        <authorList>
            <person name="Junghans H."/>
            <person name="Dalkin K."/>
            <person name="Dixon R.A."/>
        </authorList>
    </citation>
    <scope>NUCLEOTIDE SEQUENCE [MRNA]</scope>
</reference>
<dbReference type="EC" id="2.3.1.74"/>
<dbReference type="EMBL" id="L02904">
    <property type="protein sequence ID" value="AAA02826.1"/>
    <property type="molecule type" value="mRNA"/>
</dbReference>
<dbReference type="PIR" id="S35166">
    <property type="entry name" value="S35166"/>
</dbReference>
<dbReference type="SMR" id="P30076"/>
<dbReference type="UniPathway" id="UPA00154"/>
<dbReference type="GO" id="GO:0016210">
    <property type="term" value="F:naringenin-chalcone synthase activity"/>
    <property type="evidence" value="ECO:0007669"/>
    <property type="project" value="UniProtKB-EC"/>
</dbReference>
<dbReference type="GO" id="GO:0009813">
    <property type="term" value="P:flavonoid biosynthetic process"/>
    <property type="evidence" value="ECO:0007669"/>
    <property type="project" value="UniProtKB-UniPathway"/>
</dbReference>
<dbReference type="GO" id="GO:0030639">
    <property type="term" value="P:polyketide biosynthetic process"/>
    <property type="evidence" value="ECO:0007669"/>
    <property type="project" value="TreeGrafter"/>
</dbReference>
<dbReference type="CDD" id="cd00831">
    <property type="entry name" value="CHS_like"/>
    <property type="match status" value="1"/>
</dbReference>
<dbReference type="FunFam" id="3.40.47.10:FF:000014">
    <property type="entry name" value="Chalcone synthase 1"/>
    <property type="match status" value="1"/>
</dbReference>
<dbReference type="FunFam" id="3.40.47.10:FF:000025">
    <property type="entry name" value="Chalcone synthase 2"/>
    <property type="match status" value="1"/>
</dbReference>
<dbReference type="Gene3D" id="3.40.47.10">
    <property type="match status" value="2"/>
</dbReference>
<dbReference type="InterPro" id="IPR012328">
    <property type="entry name" value="Chalcone/stilbene_synt_C"/>
</dbReference>
<dbReference type="InterPro" id="IPR001099">
    <property type="entry name" value="Chalcone/stilbene_synt_N"/>
</dbReference>
<dbReference type="InterPro" id="IPR018088">
    <property type="entry name" value="Chalcone/stilbene_synthase_AS"/>
</dbReference>
<dbReference type="InterPro" id="IPR011141">
    <property type="entry name" value="Polyketide_synthase_type-III"/>
</dbReference>
<dbReference type="InterPro" id="IPR016039">
    <property type="entry name" value="Thiolase-like"/>
</dbReference>
<dbReference type="PANTHER" id="PTHR11877:SF62">
    <property type="entry name" value="CHALCONE SYNTHASE 7"/>
    <property type="match status" value="1"/>
</dbReference>
<dbReference type="PANTHER" id="PTHR11877">
    <property type="entry name" value="HYDROXYMETHYLGLUTARYL-COA SYNTHASE"/>
    <property type="match status" value="1"/>
</dbReference>
<dbReference type="Pfam" id="PF02797">
    <property type="entry name" value="Chal_sti_synt_C"/>
    <property type="match status" value="1"/>
</dbReference>
<dbReference type="Pfam" id="PF00195">
    <property type="entry name" value="Chal_sti_synt_N"/>
    <property type="match status" value="1"/>
</dbReference>
<dbReference type="PIRSF" id="PIRSF000451">
    <property type="entry name" value="PKS_III"/>
    <property type="match status" value="1"/>
</dbReference>
<dbReference type="SUPFAM" id="SSF53901">
    <property type="entry name" value="Thiolase-like"/>
    <property type="match status" value="2"/>
</dbReference>
<dbReference type="PROSITE" id="PS00441">
    <property type="entry name" value="CHALCONE_SYNTH"/>
    <property type="match status" value="1"/>
</dbReference>
<organism>
    <name type="scientific">Medicago sativa</name>
    <name type="common">Alfalfa</name>
    <dbReference type="NCBI Taxonomy" id="3879"/>
    <lineage>
        <taxon>Eukaryota</taxon>
        <taxon>Viridiplantae</taxon>
        <taxon>Streptophyta</taxon>
        <taxon>Embryophyta</taxon>
        <taxon>Tracheophyta</taxon>
        <taxon>Spermatophyta</taxon>
        <taxon>Magnoliopsida</taxon>
        <taxon>eudicotyledons</taxon>
        <taxon>Gunneridae</taxon>
        <taxon>Pentapetalae</taxon>
        <taxon>rosids</taxon>
        <taxon>fabids</taxon>
        <taxon>Fabales</taxon>
        <taxon>Fabaceae</taxon>
        <taxon>Papilionoideae</taxon>
        <taxon>50 kb inversion clade</taxon>
        <taxon>NPAAA clade</taxon>
        <taxon>Hologalegina</taxon>
        <taxon>IRL clade</taxon>
        <taxon>Trifolieae</taxon>
        <taxon>Medicago</taxon>
    </lineage>
</organism>
<sequence>MVSVSEIRTAQRAEGPATILAIGTANPANCVEQSTYPDFYFKITNSEHKTELKEKFQRMCDKSMIKRRYMYLTEEILKENPSVCEYMAPSLDARQDMVVVEVPRLGKEAAVKAIKEWGQPKSKITHLIVCTTSGVDMPGADYQLTKLLGLRPYVKRYMMYQQGCFAGGTVLRLAKDLAENNKGARVLVVCSEVTAVTFRGPSDTHLDSLVGQALFGDGAAALIVGSDPVPEIEKPIFEMVWTAQTIAPDSEGGIDGHLREAGLTFHLLKDVPGIVSKNINKALVEAFEPLGISDYNSIFWIAHPGGPAILDQVEQKLALKPEKMKATREVLSEYGNMSSACVLVILDEMRKKSAQDGLKTTGEGLEFGVLFGFGPGLTIETVVLRSVAI</sequence>
<evidence type="ECO:0000255" key="1">
    <source>
        <dbReference type="PROSITE-ProRule" id="PRU10023"/>
    </source>
</evidence>
<evidence type="ECO:0000305" key="2"/>